<evidence type="ECO:0000250" key="1">
    <source>
        <dbReference type="UniProtKB" id="Q9Y8A5"/>
    </source>
</evidence>
<evidence type="ECO:0000255" key="2"/>
<evidence type="ECO:0000255" key="3">
    <source>
        <dbReference type="PROSITE-ProRule" id="PRU00258"/>
    </source>
</evidence>
<evidence type="ECO:0000255" key="4">
    <source>
        <dbReference type="PROSITE-ProRule" id="PRU01348"/>
    </source>
</evidence>
<evidence type="ECO:0000255" key="5">
    <source>
        <dbReference type="PROSITE-ProRule" id="PRU01363"/>
    </source>
</evidence>
<evidence type="ECO:0000255" key="6">
    <source>
        <dbReference type="PROSITE-ProRule" id="PRU10022"/>
    </source>
</evidence>
<evidence type="ECO:0000269" key="7">
    <source>
    </source>
</evidence>
<evidence type="ECO:0000303" key="8">
    <source>
    </source>
</evidence>
<comment type="function">
    <text evidence="7">Highly reducing polyketide synthase (HR-PKS); part of the gene cluster that mediates the biosynthesis of aurovertins, fungal polyketides that exhibit potent inhibition of adenosine triphosphate synthase (PubMed:26340065). Tha biosynthesis starts with the HR-PKS aurA that selects propionate as the starter unit; synthesizes a hexa-ene chain through the repeated functions of the KR and DH domains in the first six iterations; selectively introduces three alpha-methyl substitutions at C4, C6, and C16 using the S-adensylmethionine-dependent cMET; and shuts off KR and DH in the last three iterations to afford a 1,3,5-triketo portion that can undergo intramolecular cyclization to yield the alpha-pyrone intermediate (PubMed:26340065). AurE may act as a cyclase and enhances the rate of pyrone formation and product release of aurA (PubMed:26340065). The methyltransferase aurB then methylates the C17 hydroxyl group (PubMed:26340065). C17 methylation is required to initiate epoxidation by the downstream monooxygenase aurC (PubMed:26340065). The monooxygenase aurC and the epoxide hydrolase aurD can iteratively transform the terminal triene portion of the methylated precursor into the dioxabicyclo[3.2.1]octane scaffold of aurovertin E. Epoxidation modifications of the precursor occur in two separate steps; bis-epoxidation of the two terminal olefins takes place first, followed by another epoxidation that occurs at C7-C8 after tetrahydrofuran formation (PubMed:26340065). The O-acyltransferase aurG converts aurovertin E to aurovertin A (PubMed:26340065).</text>
</comment>
<comment type="cofactor">
    <cofactor evidence="1">
        <name>pantetheine 4'-phosphate</name>
        <dbReference type="ChEBI" id="CHEBI:47942"/>
    </cofactor>
    <text evidence="1">Binds 1 phosphopantetheine covalently.</text>
</comment>
<comment type="pathway">
    <text evidence="7">Polyketide biosynthesis.</text>
</comment>
<comment type="disruption phenotype">
    <text evidence="7">Completely abolishes aurovertin production (PubMed:26340065).</text>
</comment>
<feature type="chain" id="PRO_0000443965" description="Highly reducing polyketide synthase aurA">
    <location>
        <begin position="1"/>
        <end position="2497"/>
    </location>
</feature>
<feature type="domain" description="Ketosynthase family 3 (KS3)" evidence="4">
    <location>
        <begin position="3"/>
        <end position="437"/>
    </location>
</feature>
<feature type="domain" description="PKS/mFAS DH" evidence="5">
    <location>
        <begin position="965"/>
        <end position="1259"/>
    </location>
</feature>
<feature type="domain" description="Carrier" evidence="3">
    <location>
        <begin position="2409"/>
        <end position="2487"/>
    </location>
</feature>
<feature type="region of interest" description="Malonyl-CoA:ACP transacylase (MAT) domain" evidence="2">
    <location>
        <begin position="575"/>
        <end position="896"/>
    </location>
</feature>
<feature type="region of interest" description="Dehydratase (DH) domain" evidence="2">
    <location>
        <begin position="965"/>
        <end position="1255"/>
    </location>
</feature>
<feature type="region of interest" description="N-terminal hotdog fold" evidence="5">
    <location>
        <begin position="965"/>
        <end position="1095"/>
    </location>
</feature>
<feature type="region of interest" description="C-terminal hotdog fold" evidence="5">
    <location>
        <begin position="1110"/>
        <end position="1259"/>
    </location>
</feature>
<feature type="region of interest" description="Methyltransferase (CMet) domain" evidence="2">
    <location>
        <begin position="1399"/>
        <end position="1594"/>
    </location>
</feature>
<feature type="region of interest" description="Ketoreductase (KR) domain" evidence="2">
    <location>
        <begin position="2150"/>
        <end position="2294"/>
    </location>
</feature>
<feature type="active site" description="For beta-ketoacyl synthase activity" evidence="4">
    <location>
        <position position="175"/>
    </location>
</feature>
<feature type="active site" description="For beta-ketoacyl synthase activity" evidence="4">
    <location>
        <position position="314"/>
    </location>
</feature>
<feature type="active site" description="For beta-ketoacyl synthase activity" evidence="4">
    <location>
        <position position="357"/>
    </location>
</feature>
<feature type="active site" description="For malonyltransferase activity" evidence="6">
    <location>
        <position position="669"/>
    </location>
</feature>
<feature type="active site" description="Proton acceptor; for dehydratase activity" evidence="5">
    <location>
        <position position="997"/>
    </location>
</feature>
<feature type="active site" description="Proton donor; for dehydratase activity" evidence="5">
    <location>
        <position position="1166"/>
    </location>
</feature>
<feature type="modified residue" description="O-(pantetheine 4'-phosphoryl)serine" evidence="3">
    <location>
        <position position="2447"/>
    </location>
</feature>
<gene>
    <name evidence="8" type="primary">aurA</name>
</gene>
<protein>
    <recommendedName>
        <fullName evidence="8">Highly reducing polyketide synthase aurA</fullName>
        <shortName evidence="8">HR-PKS aurvA</shortName>
        <ecNumber evidence="7">2.3.1.-</ecNumber>
    </recommendedName>
    <alternativeName>
        <fullName evidence="8">Aurovertin biosynthesis cluster protein A</fullName>
    </alternativeName>
</protein>
<sequence length="2497" mass="272585">MTPEPIAIIGSGCKFPGSSTSPSRLWDLISKPKDVASKPPADRFNIDGFYHPNPTNLLTTNAKESYFISENVRAFDNTFFNIAANEATSLDPQQRLLLETVYESVEAAGLRLEALRGSSTGVFCGVMCADWEAVVGLDKVVPEYAISGLARSNLANRISYFFDWNGPSMSIDTACSSSMVALHQGITALQSGECSAVAVIGTNLILTPNLYFAASNVHMLSPESRGRMWDHKANGYVRGEGVASLMLKRLSDAVADGDRIECVIRASGVNQDGRTLGLTMPSGEAQEKLIRSTYALAGLDPSRAEDRPQYFEAHGTGTQAGDYQEASGIYNTFFGANPKASAEEVLHVGSIKTVIGHSEGCAGLAGLIKASLCIQHGLIPPNLHFERLNPKLEPYSSHLKVPTALTKWPELPSGVPRRVSVNSFGFGGTNSHAILESYEPNLHGTTNGHVNGTSKKTNGLLNGASNLLDSLTNGEESTKPALLPFVFSAASEKTLGALLEKYDSYLGENPNVEAMDLAWSLIQKRSALMYRVTLYAPTIEGLQSEIQRELALRKANTPSTVISRPDTGKKRILGIFTGQGAQWPQMGLDIISTFPNARVWFEELQASLDSLPTAHKPDFSLLEELSAPKPSSRVQEAAVAQPICTAVQIVLVKLLSAIGISFDQVVGHSSGEVAAAYAAGVLNAHDAIRIAYLRGRVAHLAGANDKAGGMLAAGLSIEEATAFCELPEFAGRIMIAACNSPSSVTLSGDADAIQEAEKHLKGQDKFARRVLVDTAYHSHHMEPCSDPYLSAMTGCKIQLGEPTATTWYSTVYEGEKPNSSSHANALVGEYWKDNMRNPVLFYQALMQSITDAPPSLIVEVGPHPALKGPVLQAISEAVQTNSTIPYISTLSRGATGVKALAVTIGSLWTHLGAEGVKVEQYVALREPSRKLKFIHDLPSYPFDHSQSYWTETRRSKAYLGRGPRHELLGDLSEENTEGEWRWRNFLFRSNLEYLEGHQIQAQTIFPATGYVAMAFEAAGIMAEGRSMRLVQINDLEIDQAIAFLDDVKGIETLFRVYQIRSDGNVTNAAFSCHADIGGTLKTCASGQLVVTWGEMEANLLPSKLPSPSGMSVVDTDEFYASLGKLGYGYTGLFRGITSLKRKLNTSSGFLDNVGSEELLLHPSTMDCGLQCLLAAVGAPGDGELSRLQIPTRIQTTVINPIFCGKNNVLVGDSLEFEAAVTGLSADGASGDVSLFTRDGPGLIQFEGVHVTPLMQPTASDDRPMFSEITWGGLLPNAEPLHGPAPPLQFWAGNMDDPQHMCFAVIQEVLSKLTAEDRQRLEGYRVDVVEWFDHVVEQTRLGENPLCMKEWVDEDPTEALIHLAKTAQPIIVEITDVIRKHFLNFLRGETPMIEVYRQDNLLTRFYDQEQELKYMSLRVGDVAGQLAFRYPRMKILEIGAGTGSATRAVLGRIGQYFHSYTFTDISAGFFEDAEATFTEYADRMVYRVLDIEQDPTGQGFDANSYDLVIAANVLHATKYLEPTMNNVRRLLKPGGHLIALEITNEHILQDALLFSAFEGWWLGKHDNRPWGPKISVPKWEELLRKTGFGGVQSILPAPEKTEYSFWGYSTFVTQAINDRLEQLSEPSASDPATSIISTSDSSEKFGTLMIIGGVTDKTSYLVPALKKLLAPSFERIIHTLTIDSIEYQDASLAAALCLADMDVPTFQDLTDNKISCLKRLLEVGRRLLWVTAGSESENPYLSMSKGFLSCIGYEYEGSIHQYLNIVDPEAVNAQILSTTLMRMLLSDSTNDYSLSTGVGSIELELRLEDNVMKIPRIMNATPLNHRYAAGQRAVYSQADLEKSTVQIRSVQGNLEFFEGPVEGSTETQLDQGQSTIPVHVRYSASLALKVQNGGFLNLVLGTHEVSNVRLIAFSDNNASRVSVPSALCWELTNNIAEDQEAQFLNIMASAVLARNIIQTASTNTSLLVHEANDALRHAIWTQAVAKGVQPYFSTSDTSKKQSNSSTLVFHETSSTRALARILPTGLSVIANFGKAAPNGVMAKIKPLLSPDVTQEDTGTLYRVSPLLSKGFNLDEVTQTFKVSRIVATEVMHSLANNFAAVHGETNVISIDKLSGRDAKTGELEILDWTQARELPVRVSSASSQVKLSASKTYLLVASRTPKVEPQWLDEMSRLGARVRIEPMDVTDRESILSVDRTIRRTLPPIGGVVNGAMVLQDRMFADATLDNILGTYKPKVQGSRLLEDIYGDEDLDFFILFGSATAILGNMGQSSYGAATNFMRSLIRGRRERNLVGSIIHPAEVRGVGYISRMGIELSRLMNKLVGSHIVSEKDLHETFAEAILAGKPASGRNPEVISGFNQHDPEEIPDLIWYSNPETWPLVNYRLQSTTSQSTSTLMPIKQQLESATSLAEAAELVLIALNAKIVQKLHLSEDTHMTPDTRLAELGADSLVAVDLRTWFIRELDVEIPILQIQSGASIGDLANSATSKISDSLIPNVKR</sequence>
<dbReference type="EC" id="2.3.1.-" evidence="7"/>
<dbReference type="EMBL" id="KT581574">
    <property type="protein sequence ID" value="ALD83627.1"/>
    <property type="molecule type" value="Genomic_DNA"/>
</dbReference>
<dbReference type="SMR" id="A0A0M4L8I7"/>
<dbReference type="GO" id="GO:0004315">
    <property type="term" value="F:3-oxoacyl-[acyl-carrier-protein] synthase activity"/>
    <property type="evidence" value="ECO:0007669"/>
    <property type="project" value="InterPro"/>
</dbReference>
<dbReference type="GO" id="GO:0004312">
    <property type="term" value="F:fatty acid synthase activity"/>
    <property type="evidence" value="ECO:0007669"/>
    <property type="project" value="TreeGrafter"/>
</dbReference>
<dbReference type="GO" id="GO:0008168">
    <property type="term" value="F:methyltransferase activity"/>
    <property type="evidence" value="ECO:0007669"/>
    <property type="project" value="UniProtKB-KW"/>
</dbReference>
<dbReference type="GO" id="GO:0016491">
    <property type="term" value="F:oxidoreductase activity"/>
    <property type="evidence" value="ECO:0007669"/>
    <property type="project" value="UniProtKB-KW"/>
</dbReference>
<dbReference type="GO" id="GO:0031177">
    <property type="term" value="F:phosphopantetheine binding"/>
    <property type="evidence" value="ECO:0007669"/>
    <property type="project" value="InterPro"/>
</dbReference>
<dbReference type="GO" id="GO:0006633">
    <property type="term" value="P:fatty acid biosynthetic process"/>
    <property type="evidence" value="ECO:0007669"/>
    <property type="project" value="InterPro"/>
</dbReference>
<dbReference type="GO" id="GO:0032259">
    <property type="term" value="P:methylation"/>
    <property type="evidence" value="ECO:0007669"/>
    <property type="project" value="UniProtKB-KW"/>
</dbReference>
<dbReference type="GO" id="GO:0044550">
    <property type="term" value="P:secondary metabolite biosynthetic process"/>
    <property type="evidence" value="ECO:0007669"/>
    <property type="project" value="TreeGrafter"/>
</dbReference>
<dbReference type="CDD" id="cd02440">
    <property type="entry name" value="AdoMet_MTases"/>
    <property type="match status" value="1"/>
</dbReference>
<dbReference type="CDD" id="cd00833">
    <property type="entry name" value="PKS"/>
    <property type="match status" value="1"/>
</dbReference>
<dbReference type="Gene3D" id="3.30.70.3290">
    <property type="match status" value="1"/>
</dbReference>
<dbReference type="Gene3D" id="3.40.47.10">
    <property type="match status" value="1"/>
</dbReference>
<dbReference type="Gene3D" id="1.10.1200.10">
    <property type="entry name" value="ACP-like"/>
    <property type="match status" value="1"/>
</dbReference>
<dbReference type="Gene3D" id="3.40.366.10">
    <property type="entry name" value="Malonyl-Coenzyme A Acyl Carrier Protein, domain 2"/>
    <property type="match status" value="1"/>
</dbReference>
<dbReference type="Gene3D" id="3.40.50.720">
    <property type="entry name" value="NAD(P)-binding Rossmann-like Domain"/>
    <property type="match status" value="1"/>
</dbReference>
<dbReference type="Gene3D" id="3.10.129.110">
    <property type="entry name" value="Polyketide synthase dehydratase"/>
    <property type="match status" value="1"/>
</dbReference>
<dbReference type="Gene3D" id="3.40.50.150">
    <property type="entry name" value="Vaccinia Virus protein VP39"/>
    <property type="match status" value="1"/>
</dbReference>
<dbReference type="InterPro" id="IPR001227">
    <property type="entry name" value="Ac_transferase_dom_sf"/>
</dbReference>
<dbReference type="InterPro" id="IPR036736">
    <property type="entry name" value="ACP-like_sf"/>
</dbReference>
<dbReference type="InterPro" id="IPR014043">
    <property type="entry name" value="Acyl_transferase_dom"/>
</dbReference>
<dbReference type="InterPro" id="IPR016035">
    <property type="entry name" value="Acyl_Trfase/lysoPLipase"/>
</dbReference>
<dbReference type="InterPro" id="IPR018201">
    <property type="entry name" value="Ketoacyl_synth_AS"/>
</dbReference>
<dbReference type="InterPro" id="IPR014031">
    <property type="entry name" value="Ketoacyl_synth_C"/>
</dbReference>
<dbReference type="InterPro" id="IPR014030">
    <property type="entry name" value="Ketoacyl_synth_N"/>
</dbReference>
<dbReference type="InterPro" id="IPR016036">
    <property type="entry name" value="Malonyl_transacylase_ACP-bd"/>
</dbReference>
<dbReference type="InterPro" id="IPR013217">
    <property type="entry name" value="Methyltransf_12"/>
</dbReference>
<dbReference type="InterPro" id="IPR036291">
    <property type="entry name" value="NAD(P)-bd_dom_sf"/>
</dbReference>
<dbReference type="InterPro" id="IPR032821">
    <property type="entry name" value="PKS_assoc"/>
</dbReference>
<dbReference type="InterPro" id="IPR020841">
    <property type="entry name" value="PKS_Beta-ketoAc_synthase_dom"/>
</dbReference>
<dbReference type="InterPro" id="IPR042104">
    <property type="entry name" value="PKS_dehydratase_sf"/>
</dbReference>
<dbReference type="InterPro" id="IPR020807">
    <property type="entry name" value="PKS_DH"/>
</dbReference>
<dbReference type="InterPro" id="IPR049551">
    <property type="entry name" value="PKS_DH_C"/>
</dbReference>
<dbReference type="InterPro" id="IPR049552">
    <property type="entry name" value="PKS_DH_N"/>
</dbReference>
<dbReference type="InterPro" id="IPR013968">
    <property type="entry name" value="PKS_KR"/>
</dbReference>
<dbReference type="InterPro" id="IPR049900">
    <property type="entry name" value="PKS_mFAS_DH"/>
</dbReference>
<dbReference type="InterPro" id="IPR050091">
    <property type="entry name" value="PKS_NRPS_Biosynth_Enz"/>
</dbReference>
<dbReference type="InterPro" id="IPR020806">
    <property type="entry name" value="PKS_PP-bd"/>
</dbReference>
<dbReference type="InterPro" id="IPR009081">
    <property type="entry name" value="PP-bd_ACP"/>
</dbReference>
<dbReference type="InterPro" id="IPR006162">
    <property type="entry name" value="Ppantetheine_attach_site"/>
</dbReference>
<dbReference type="InterPro" id="IPR029063">
    <property type="entry name" value="SAM-dependent_MTases_sf"/>
</dbReference>
<dbReference type="InterPro" id="IPR016039">
    <property type="entry name" value="Thiolase-like"/>
</dbReference>
<dbReference type="PANTHER" id="PTHR43775">
    <property type="entry name" value="FATTY ACID SYNTHASE"/>
    <property type="match status" value="1"/>
</dbReference>
<dbReference type="PANTHER" id="PTHR43775:SF48">
    <property type="entry name" value="HIGHLY REDUCING POLYKETIDE SYNTHASE SDGA"/>
    <property type="match status" value="1"/>
</dbReference>
<dbReference type="Pfam" id="PF00698">
    <property type="entry name" value="Acyl_transf_1"/>
    <property type="match status" value="1"/>
</dbReference>
<dbReference type="Pfam" id="PF16197">
    <property type="entry name" value="KAsynt_C_assoc"/>
    <property type="match status" value="1"/>
</dbReference>
<dbReference type="Pfam" id="PF00109">
    <property type="entry name" value="ketoacyl-synt"/>
    <property type="match status" value="1"/>
</dbReference>
<dbReference type="Pfam" id="PF02801">
    <property type="entry name" value="Ketoacyl-synt_C"/>
    <property type="match status" value="1"/>
</dbReference>
<dbReference type="Pfam" id="PF08659">
    <property type="entry name" value="KR"/>
    <property type="match status" value="1"/>
</dbReference>
<dbReference type="Pfam" id="PF08242">
    <property type="entry name" value="Methyltransf_12"/>
    <property type="match status" value="1"/>
</dbReference>
<dbReference type="Pfam" id="PF21089">
    <property type="entry name" value="PKS_DH_N"/>
    <property type="match status" value="1"/>
</dbReference>
<dbReference type="Pfam" id="PF00550">
    <property type="entry name" value="PP-binding"/>
    <property type="match status" value="1"/>
</dbReference>
<dbReference type="Pfam" id="PF14765">
    <property type="entry name" value="PS-DH"/>
    <property type="match status" value="1"/>
</dbReference>
<dbReference type="SMART" id="SM00827">
    <property type="entry name" value="PKS_AT"/>
    <property type="match status" value="1"/>
</dbReference>
<dbReference type="SMART" id="SM00826">
    <property type="entry name" value="PKS_DH"/>
    <property type="match status" value="1"/>
</dbReference>
<dbReference type="SMART" id="SM00822">
    <property type="entry name" value="PKS_KR"/>
    <property type="match status" value="1"/>
</dbReference>
<dbReference type="SMART" id="SM00825">
    <property type="entry name" value="PKS_KS"/>
    <property type="match status" value="1"/>
</dbReference>
<dbReference type="SMART" id="SM00823">
    <property type="entry name" value="PKS_PP"/>
    <property type="match status" value="1"/>
</dbReference>
<dbReference type="SUPFAM" id="SSF47336">
    <property type="entry name" value="ACP-like"/>
    <property type="match status" value="1"/>
</dbReference>
<dbReference type="SUPFAM" id="SSF52151">
    <property type="entry name" value="FabD/lysophospholipase-like"/>
    <property type="match status" value="1"/>
</dbReference>
<dbReference type="SUPFAM" id="SSF51735">
    <property type="entry name" value="NAD(P)-binding Rossmann-fold domains"/>
    <property type="match status" value="1"/>
</dbReference>
<dbReference type="SUPFAM" id="SSF55048">
    <property type="entry name" value="Probable ACP-binding domain of malonyl-CoA ACP transacylase"/>
    <property type="match status" value="1"/>
</dbReference>
<dbReference type="SUPFAM" id="SSF53335">
    <property type="entry name" value="S-adenosyl-L-methionine-dependent methyltransferases"/>
    <property type="match status" value="1"/>
</dbReference>
<dbReference type="SUPFAM" id="SSF53901">
    <property type="entry name" value="Thiolase-like"/>
    <property type="match status" value="1"/>
</dbReference>
<dbReference type="PROSITE" id="PS50075">
    <property type="entry name" value="CARRIER"/>
    <property type="match status" value="1"/>
</dbReference>
<dbReference type="PROSITE" id="PS00606">
    <property type="entry name" value="KS3_1"/>
    <property type="match status" value="1"/>
</dbReference>
<dbReference type="PROSITE" id="PS52004">
    <property type="entry name" value="KS3_2"/>
    <property type="match status" value="1"/>
</dbReference>
<dbReference type="PROSITE" id="PS00012">
    <property type="entry name" value="PHOSPHOPANTETHEINE"/>
    <property type="match status" value="1"/>
</dbReference>
<dbReference type="PROSITE" id="PS52019">
    <property type="entry name" value="PKS_MFAS_DH"/>
    <property type="match status" value="1"/>
</dbReference>
<name>AURA_CALAK</name>
<proteinExistence type="evidence at protein level"/>
<keyword id="KW-0012">Acyltransferase</keyword>
<keyword id="KW-0489">Methyltransferase</keyword>
<keyword id="KW-0511">Multifunctional enzyme</keyword>
<keyword id="KW-0521">NADP</keyword>
<keyword id="KW-0560">Oxidoreductase</keyword>
<keyword id="KW-0596">Phosphopantetheine</keyword>
<keyword id="KW-0597">Phosphoprotein</keyword>
<keyword id="KW-0949">S-adenosyl-L-methionine</keyword>
<keyword id="KW-0808">Transferase</keyword>
<reference key="1">
    <citation type="journal article" date="2015" name="J. Am. Chem. Soc.">
        <title>Efficient biosynthesis of fungal polyketides containing the dioxabicyclo-octane ring system.</title>
        <authorList>
            <person name="Mao X.M."/>
            <person name="Zhan Z.J."/>
            <person name="Grayson M.N."/>
            <person name="Tang M.C."/>
            <person name="Xu W."/>
            <person name="Li Y.Q."/>
            <person name="Yin W.B."/>
            <person name="Lin H.C."/>
            <person name="Chooi Y.H."/>
            <person name="Houk K.N."/>
            <person name="Tang Y."/>
        </authorList>
    </citation>
    <scope>NUCLEOTIDE SEQUENCE [GENOMIC DNA]</scope>
    <scope>FUNCTION</scope>
    <scope>DISRUPTION PHENOTYPE</scope>
    <scope>CATALYTIC ACTIVITY</scope>
    <scope>PATHWAY</scope>
</reference>
<accession>A0A0M4L8I7</accession>
<organism>
    <name type="scientific">Calcarisporium arbuscula</name>
    <name type="common">Dendryphion arbuscula</name>
    <dbReference type="NCBI Taxonomy" id="240499"/>
    <lineage>
        <taxon>Eukaryota</taxon>
        <taxon>Fungi</taxon>
        <taxon>Dikarya</taxon>
        <taxon>Ascomycota</taxon>
        <taxon>Pezizomycotina</taxon>
        <taxon>Sordariomycetes</taxon>
        <taxon>Hypocreomycetidae</taxon>
        <taxon>Hypocreales</taxon>
        <taxon>Hypocreales incertae sedis</taxon>
        <taxon>Calcarisporium</taxon>
    </lineage>
</organism>